<accession>Q6CKH7</accession>
<feature type="chain" id="PRO_0000320399" description="Ribosome biogenesis protein NSA1">
    <location>
        <begin position="1"/>
        <end position="436"/>
    </location>
</feature>
<organism>
    <name type="scientific">Kluyveromyces lactis (strain ATCC 8585 / CBS 2359 / DSM 70799 / NBRC 1267 / NRRL Y-1140 / WM37)</name>
    <name type="common">Yeast</name>
    <name type="synonym">Candida sphaerica</name>
    <dbReference type="NCBI Taxonomy" id="284590"/>
    <lineage>
        <taxon>Eukaryota</taxon>
        <taxon>Fungi</taxon>
        <taxon>Dikarya</taxon>
        <taxon>Ascomycota</taxon>
        <taxon>Saccharomycotina</taxon>
        <taxon>Saccharomycetes</taxon>
        <taxon>Saccharomycetales</taxon>
        <taxon>Saccharomycetaceae</taxon>
        <taxon>Kluyveromyces</taxon>
    </lineage>
</organism>
<gene>
    <name type="primary">NSA1</name>
    <name type="ordered locus">KLLA0F10593g</name>
</gene>
<evidence type="ECO:0000250" key="1"/>
<evidence type="ECO:0000305" key="2"/>
<reference key="1">
    <citation type="journal article" date="2004" name="Nature">
        <title>Genome evolution in yeasts.</title>
        <authorList>
            <person name="Dujon B."/>
            <person name="Sherman D."/>
            <person name="Fischer G."/>
            <person name="Durrens P."/>
            <person name="Casaregola S."/>
            <person name="Lafontaine I."/>
            <person name="de Montigny J."/>
            <person name="Marck C."/>
            <person name="Neuveglise C."/>
            <person name="Talla E."/>
            <person name="Goffard N."/>
            <person name="Frangeul L."/>
            <person name="Aigle M."/>
            <person name="Anthouard V."/>
            <person name="Babour A."/>
            <person name="Barbe V."/>
            <person name="Barnay S."/>
            <person name="Blanchin S."/>
            <person name="Beckerich J.-M."/>
            <person name="Beyne E."/>
            <person name="Bleykasten C."/>
            <person name="Boisrame A."/>
            <person name="Boyer J."/>
            <person name="Cattolico L."/>
            <person name="Confanioleri F."/>
            <person name="de Daruvar A."/>
            <person name="Despons L."/>
            <person name="Fabre E."/>
            <person name="Fairhead C."/>
            <person name="Ferry-Dumazet H."/>
            <person name="Groppi A."/>
            <person name="Hantraye F."/>
            <person name="Hennequin C."/>
            <person name="Jauniaux N."/>
            <person name="Joyet P."/>
            <person name="Kachouri R."/>
            <person name="Kerrest A."/>
            <person name="Koszul R."/>
            <person name="Lemaire M."/>
            <person name="Lesur I."/>
            <person name="Ma L."/>
            <person name="Muller H."/>
            <person name="Nicaud J.-M."/>
            <person name="Nikolski M."/>
            <person name="Oztas S."/>
            <person name="Ozier-Kalogeropoulos O."/>
            <person name="Pellenz S."/>
            <person name="Potier S."/>
            <person name="Richard G.-F."/>
            <person name="Straub M.-L."/>
            <person name="Suleau A."/>
            <person name="Swennen D."/>
            <person name="Tekaia F."/>
            <person name="Wesolowski-Louvel M."/>
            <person name="Westhof E."/>
            <person name="Wirth B."/>
            <person name="Zeniou-Meyer M."/>
            <person name="Zivanovic Y."/>
            <person name="Bolotin-Fukuhara M."/>
            <person name="Thierry A."/>
            <person name="Bouchier C."/>
            <person name="Caudron B."/>
            <person name="Scarpelli C."/>
            <person name="Gaillardin C."/>
            <person name="Weissenbach J."/>
            <person name="Wincker P."/>
            <person name="Souciet J.-L."/>
        </authorList>
    </citation>
    <scope>NUCLEOTIDE SEQUENCE [LARGE SCALE GENOMIC DNA]</scope>
    <source>
        <strain>ATCC 8585 / CBS 2359 / DSM 70799 / NBRC 1267 / NRRL Y-1140 / WM37</strain>
    </source>
</reference>
<proteinExistence type="inferred from homology"/>
<dbReference type="EMBL" id="CR382126">
    <property type="protein sequence ID" value="CAG98270.1"/>
    <property type="molecule type" value="Genomic_DNA"/>
</dbReference>
<dbReference type="RefSeq" id="XP_455562.1">
    <property type="nucleotide sequence ID" value="XM_455562.1"/>
</dbReference>
<dbReference type="SMR" id="Q6CKH7"/>
<dbReference type="FunCoup" id="Q6CKH7">
    <property type="interactions" value="699"/>
</dbReference>
<dbReference type="STRING" id="284590.Q6CKH7"/>
<dbReference type="PaxDb" id="284590-Q6CKH7"/>
<dbReference type="KEGG" id="kla:KLLA0_F10593g"/>
<dbReference type="eggNOG" id="KOG3881">
    <property type="taxonomic scope" value="Eukaryota"/>
</dbReference>
<dbReference type="HOGENOM" id="CLU_033769_4_0_1"/>
<dbReference type="InParanoid" id="Q6CKH7"/>
<dbReference type="OMA" id="IWEAKNV"/>
<dbReference type="Proteomes" id="UP000000598">
    <property type="component" value="Chromosome F"/>
</dbReference>
<dbReference type="GO" id="GO:0005730">
    <property type="term" value="C:nucleolus"/>
    <property type="evidence" value="ECO:0007669"/>
    <property type="project" value="UniProtKB-SubCell"/>
</dbReference>
<dbReference type="GO" id="GO:0030687">
    <property type="term" value="C:preribosome, large subunit precursor"/>
    <property type="evidence" value="ECO:0007669"/>
    <property type="project" value="TreeGrafter"/>
</dbReference>
<dbReference type="GO" id="GO:0042273">
    <property type="term" value="P:ribosomal large subunit biogenesis"/>
    <property type="evidence" value="ECO:0007669"/>
    <property type="project" value="InterPro"/>
</dbReference>
<dbReference type="GO" id="GO:0006364">
    <property type="term" value="P:rRNA processing"/>
    <property type="evidence" value="ECO:0007669"/>
    <property type="project" value="UniProtKB-KW"/>
</dbReference>
<dbReference type="CDD" id="cd22858">
    <property type="entry name" value="Nsa1"/>
    <property type="match status" value="1"/>
</dbReference>
<dbReference type="InterPro" id="IPR036322">
    <property type="entry name" value="WD40_repeat_dom_sf"/>
</dbReference>
<dbReference type="InterPro" id="IPR037379">
    <property type="entry name" value="WDR74/Nsa1"/>
</dbReference>
<dbReference type="PANTHER" id="PTHR16038">
    <property type="entry name" value="NOP SEVEN ASSOCIATED PROTEIN 1"/>
    <property type="match status" value="1"/>
</dbReference>
<dbReference type="PANTHER" id="PTHR16038:SF4">
    <property type="entry name" value="WD REPEAT-CONTAINING PROTEIN 74"/>
    <property type="match status" value="1"/>
</dbReference>
<dbReference type="SUPFAM" id="SSF50978">
    <property type="entry name" value="WD40 repeat-like"/>
    <property type="match status" value="1"/>
</dbReference>
<name>NSA1_KLULA</name>
<keyword id="KW-0539">Nucleus</keyword>
<keyword id="KW-1185">Reference proteome</keyword>
<keyword id="KW-0690">Ribosome biogenesis</keyword>
<keyword id="KW-0698">rRNA processing</keyword>
<protein>
    <recommendedName>
        <fullName>Ribosome biogenesis protein NSA1</fullName>
    </recommendedName>
</protein>
<comment type="function">
    <text evidence="1">Involved in the biogenesis of the 60S ribosomal subunit.</text>
</comment>
<comment type="subunit">
    <text evidence="1">Component of the pre-66S ribosomal particle.</text>
</comment>
<comment type="subcellular location">
    <subcellularLocation>
        <location evidence="1">Nucleus</location>
        <location evidence="1">Nucleolus</location>
    </subcellularLocation>
</comment>
<comment type="similarity">
    <text evidence="2">Belongs to the NSA1 family.</text>
</comment>
<sequence>MRVLLASDDSGSLKEIIFNRGTNTSIKTALQPFHIDIHLNQGLSNRIDKIYHVSDSLLLLARHSGSLELVSSKRVSKDVDETNEPKYDVTEFELQDLISGLFDQSVLDTLSSKSKKKSKIEDQFVELYLIKKSAKNPIFLAATKSGNVTIIEVDLHSTKISKIASHKIKAPVEFVTLYDLDKSDKFVMAYGGEENLVRLIELSSDFKEISDIWAAKNVPFDNIGLRVPAWDVALRFLESEKNGVYNFITITKYAQLRKYSTNAEDCRPVKSITLLPKGEQLNSCKIIGDTSPLGNFQSSNFDELEFLAADSRKDVYQFNGKGRLLRKIAKGDITGFASCIAVTDKYLLQGGLDRYVRIFDLADYKLLAKIFTGGKVSDIILLEDNDLELPLTEKQLKMKKKKEAKRSIVEADEDAENEDLWNKLESKKRKVSKNDI</sequence>